<protein>
    <recommendedName>
        <fullName evidence="1">Small ribosomal subunit protein uS11</fullName>
    </recommendedName>
    <alternativeName>
        <fullName evidence="2">30S ribosomal protein S11</fullName>
    </alternativeName>
</protein>
<evidence type="ECO:0000255" key="1">
    <source>
        <dbReference type="HAMAP-Rule" id="MF_01310"/>
    </source>
</evidence>
<evidence type="ECO:0000305" key="2"/>
<evidence type="ECO:0007829" key="3">
    <source>
        <dbReference type="PDB" id="7M4U"/>
    </source>
</evidence>
<reference key="1">
    <citation type="journal article" date="2008" name="J. Bacteriol.">
        <title>Comparative genome sequence analysis of multidrug-resistant Acinetobacter baumannii.</title>
        <authorList>
            <person name="Adams M.D."/>
            <person name="Goglin K."/>
            <person name="Molyneaux N."/>
            <person name="Hujer K.M."/>
            <person name="Lavender H."/>
            <person name="Jamison J.J."/>
            <person name="MacDonald I.J."/>
            <person name="Martin K.M."/>
            <person name="Russo T."/>
            <person name="Campagnari A.A."/>
            <person name="Hujer A.M."/>
            <person name="Bonomo R.A."/>
            <person name="Gill S.R."/>
        </authorList>
    </citation>
    <scope>NUCLEOTIDE SEQUENCE [LARGE SCALE GENOMIC DNA]</scope>
    <source>
        <strain>AB0057</strain>
    </source>
</reference>
<proteinExistence type="evidence at protein level"/>
<comment type="function">
    <text evidence="1">Located on the platform of the 30S subunit, it bridges several disparate RNA helices of the 16S rRNA. Forms part of the Shine-Dalgarno cleft in the 70S ribosome.</text>
</comment>
<comment type="subunit">
    <text evidence="1">Part of the 30S ribosomal subunit. Interacts with proteins S7 and S18. Binds to IF-3.</text>
</comment>
<comment type="similarity">
    <text evidence="1">Belongs to the universal ribosomal protein uS11 family.</text>
</comment>
<gene>
    <name evidence="1" type="primary">rpsK</name>
    <name type="ordered locus">AB57_3507</name>
</gene>
<accession>B7IA16</accession>
<name>RS11_ACIB5</name>
<feature type="chain" id="PRO_1000141041" description="Small ribosomal subunit protein uS11">
    <location>
        <begin position="1"/>
        <end position="128"/>
    </location>
</feature>
<feature type="strand" evidence="3">
    <location>
        <begin position="16"/>
        <end position="24"/>
    </location>
</feature>
<feature type="strand" evidence="3">
    <location>
        <begin position="29"/>
        <end position="35"/>
    </location>
</feature>
<feature type="strand" evidence="3">
    <location>
        <begin position="40"/>
        <end position="45"/>
    </location>
</feature>
<feature type="turn" evidence="3">
    <location>
        <begin position="46"/>
        <end position="48"/>
    </location>
</feature>
<feature type="helix" evidence="3">
    <location>
        <begin position="54"/>
        <end position="57"/>
    </location>
</feature>
<feature type="helix" evidence="3">
    <location>
        <begin position="59"/>
        <end position="74"/>
    </location>
</feature>
<feature type="strand" evidence="3">
    <location>
        <begin position="80"/>
        <end position="86"/>
    </location>
</feature>
<feature type="helix" evidence="3">
    <location>
        <begin position="92"/>
        <end position="101"/>
    </location>
</feature>
<feature type="strand" evidence="3">
    <location>
        <begin position="105"/>
        <end position="111"/>
    </location>
</feature>
<dbReference type="EMBL" id="CP001182">
    <property type="protein sequence ID" value="ACJ42874.1"/>
    <property type="molecule type" value="Genomic_DNA"/>
</dbReference>
<dbReference type="RefSeq" id="WP_001040166.1">
    <property type="nucleotide sequence ID" value="NC_011586.2"/>
</dbReference>
<dbReference type="PDB" id="7M4U">
    <property type="method" value="EM"/>
    <property type="resolution" value="2.71 A"/>
    <property type="chains" value="k=1-128"/>
</dbReference>
<dbReference type="PDBsum" id="7M4U"/>
<dbReference type="SMR" id="B7IA16"/>
<dbReference type="IntAct" id="B7IA16">
    <property type="interactions" value="1"/>
</dbReference>
<dbReference type="GeneID" id="97425222"/>
<dbReference type="KEGG" id="abn:AB57_3507"/>
<dbReference type="HOGENOM" id="CLU_072439_5_0_6"/>
<dbReference type="Proteomes" id="UP000007094">
    <property type="component" value="Chromosome"/>
</dbReference>
<dbReference type="GO" id="GO:1990904">
    <property type="term" value="C:ribonucleoprotein complex"/>
    <property type="evidence" value="ECO:0007669"/>
    <property type="project" value="UniProtKB-KW"/>
</dbReference>
<dbReference type="GO" id="GO:0005840">
    <property type="term" value="C:ribosome"/>
    <property type="evidence" value="ECO:0007669"/>
    <property type="project" value="UniProtKB-KW"/>
</dbReference>
<dbReference type="GO" id="GO:0019843">
    <property type="term" value="F:rRNA binding"/>
    <property type="evidence" value="ECO:0007669"/>
    <property type="project" value="UniProtKB-UniRule"/>
</dbReference>
<dbReference type="GO" id="GO:0003735">
    <property type="term" value="F:structural constituent of ribosome"/>
    <property type="evidence" value="ECO:0007669"/>
    <property type="project" value="InterPro"/>
</dbReference>
<dbReference type="GO" id="GO:0006412">
    <property type="term" value="P:translation"/>
    <property type="evidence" value="ECO:0007669"/>
    <property type="project" value="UniProtKB-UniRule"/>
</dbReference>
<dbReference type="FunFam" id="3.30.420.80:FF:000001">
    <property type="entry name" value="30S ribosomal protein S11"/>
    <property type="match status" value="1"/>
</dbReference>
<dbReference type="Gene3D" id="3.30.420.80">
    <property type="entry name" value="Ribosomal protein S11"/>
    <property type="match status" value="1"/>
</dbReference>
<dbReference type="HAMAP" id="MF_01310">
    <property type="entry name" value="Ribosomal_uS11"/>
    <property type="match status" value="1"/>
</dbReference>
<dbReference type="InterPro" id="IPR001971">
    <property type="entry name" value="Ribosomal_uS11"/>
</dbReference>
<dbReference type="InterPro" id="IPR019981">
    <property type="entry name" value="Ribosomal_uS11_bac-type"/>
</dbReference>
<dbReference type="InterPro" id="IPR018102">
    <property type="entry name" value="Ribosomal_uS11_CS"/>
</dbReference>
<dbReference type="InterPro" id="IPR036967">
    <property type="entry name" value="Ribosomal_uS11_sf"/>
</dbReference>
<dbReference type="NCBIfam" id="NF003698">
    <property type="entry name" value="PRK05309.1"/>
    <property type="match status" value="1"/>
</dbReference>
<dbReference type="NCBIfam" id="TIGR03632">
    <property type="entry name" value="uS11_bact"/>
    <property type="match status" value="1"/>
</dbReference>
<dbReference type="PANTHER" id="PTHR11759">
    <property type="entry name" value="40S RIBOSOMAL PROTEIN S14/30S RIBOSOMAL PROTEIN S11"/>
    <property type="match status" value="1"/>
</dbReference>
<dbReference type="Pfam" id="PF00411">
    <property type="entry name" value="Ribosomal_S11"/>
    <property type="match status" value="1"/>
</dbReference>
<dbReference type="PIRSF" id="PIRSF002131">
    <property type="entry name" value="Ribosomal_S11"/>
    <property type="match status" value="1"/>
</dbReference>
<dbReference type="SUPFAM" id="SSF53137">
    <property type="entry name" value="Translational machinery components"/>
    <property type="match status" value="1"/>
</dbReference>
<dbReference type="PROSITE" id="PS00054">
    <property type="entry name" value="RIBOSOMAL_S11"/>
    <property type="match status" value="1"/>
</dbReference>
<organism>
    <name type="scientific">Acinetobacter baumannii (strain AB0057)</name>
    <dbReference type="NCBI Taxonomy" id="480119"/>
    <lineage>
        <taxon>Bacteria</taxon>
        <taxon>Pseudomonadati</taxon>
        <taxon>Pseudomonadota</taxon>
        <taxon>Gammaproteobacteria</taxon>
        <taxon>Moraxellales</taxon>
        <taxon>Moraxellaceae</taxon>
        <taxon>Acinetobacter</taxon>
        <taxon>Acinetobacter calcoaceticus/baumannii complex</taxon>
    </lineage>
</organism>
<keyword id="KW-0002">3D-structure</keyword>
<keyword id="KW-0687">Ribonucleoprotein</keyword>
<keyword id="KW-0689">Ribosomal protein</keyword>
<keyword id="KW-0694">RNA-binding</keyword>
<keyword id="KW-0699">rRNA-binding</keyword>
<sequence length="128" mass="13534">MAKDTRTRKKVTRTVSEGVAHIHASFNNTIVTITDRQGNALAWATSGGQGFRGSRKSTPFAAQVAAEVAGKAALDYGLKNLDVLVKGPGPGRESAVRALGAVGYKINSITDVTPIPHNGCRPPKKRRV</sequence>